<dbReference type="EC" id="2.5.1.39" evidence="1"/>
<dbReference type="EMBL" id="CT573326">
    <property type="protein sequence ID" value="CAK18073.1"/>
    <property type="molecule type" value="Genomic_DNA"/>
</dbReference>
<dbReference type="RefSeq" id="WP_011536425.1">
    <property type="nucleotide sequence ID" value="NC_008027.1"/>
</dbReference>
<dbReference type="SMR" id="Q1I2R3"/>
<dbReference type="STRING" id="384676.PSEEN5462"/>
<dbReference type="GeneID" id="32808367"/>
<dbReference type="KEGG" id="pen:PSEEN5462"/>
<dbReference type="eggNOG" id="COG0382">
    <property type="taxonomic scope" value="Bacteria"/>
</dbReference>
<dbReference type="HOGENOM" id="CLU_034879_1_0_6"/>
<dbReference type="OrthoDB" id="9782418at2"/>
<dbReference type="UniPathway" id="UPA00232"/>
<dbReference type="Proteomes" id="UP000000658">
    <property type="component" value="Chromosome"/>
</dbReference>
<dbReference type="GO" id="GO:0005886">
    <property type="term" value="C:plasma membrane"/>
    <property type="evidence" value="ECO:0007669"/>
    <property type="project" value="UniProtKB-SubCell"/>
</dbReference>
<dbReference type="GO" id="GO:0008412">
    <property type="term" value="F:4-hydroxybenzoate polyprenyltransferase activity"/>
    <property type="evidence" value="ECO:0007669"/>
    <property type="project" value="UniProtKB-UniRule"/>
</dbReference>
<dbReference type="GO" id="GO:0006744">
    <property type="term" value="P:ubiquinone biosynthetic process"/>
    <property type="evidence" value="ECO:0007669"/>
    <property type="project" value="UniProtKB-UniRule"/>
</dbReference>
<dbReference type="CDD" id="cd13959">
    <property type="entry name" value="PT_UbiA_COQ2"/>
    <property type="match status" value="1"/>
</dbReference>
<dbReference type="FunFam" id="1.10.357.140:FF:000002">
    <property type="entry name" value="4-hydroxybenzoate octaprenyltransferase"/>
    <property type="match status" value="1"/>
</dbReference>
<dbReference type="FunFam" id="1.20.120.1780:FF:000001">
    <property type="entry name" value="4-hydroxybenzoate octaprenyltransferase"/>
    <property type="match status" value="1"/>
</dbReference>
<dbReference type="Gene3D" id="1.10.357.140">
    <property type="entry name" value="UbiA prenyltransferase"/>
    <property type="match status" value="1"/>
</dbReference>
<dbReference type="Gene3D" id="1.20.120.1780">
    <property type="entry name" value="UbiA prenyltransferase"/>
    <property type="match status" value="1"/>
</dbReference>
<dbReference type="HAMAP" id="MF_01635">
    <property type="entry name" value="UbiA"/>
    <property type="match status" value="1"/>
</dbReference>
<dbReference type="InterPro" id="IPR006370">
    <property type="entry name" value="HB_polyprenyltransferase-like"/>
</dbReference>
<dbReference type="InterPro" id="IPR039653">
    <property type="entry name" value="Prenyltransferase"/>
</dbReference>
<dbReference type="InterPro" id="IPR000537">
    <property type="entry name" value="UbiA_prenyltransferase"/>
</dbReference>
<dbReference type="InterPro" id="IPR044878">
    <property type="entry name" value="UbiA_sf"/>
</dbReference>
<dbReference type="NCBIfam" id="TIGR01474">
    <property type="entry name" value="ubiA_proteo"/>
    <property type="match status" value="1"/>
</dbReference>
<dbReference type="PANTHER" id="PTHR11048:SF28">
    <property type="entry name" value="4-HYDROXYBENZOATE POLYPRENYLTRANSFERASE, MITOCHONDRIAL"/>
    <property type="match status" value="1"/>
</dbReference>
<dbReference type="PANTHER" id="PTHR11048">
    <property type="entry name" value="PRENYLTRANSFERASES"/>
    <property type="match status" value="1"/>
</dbReference>
<dbReference type="Pfam" id="PF01040">
    <property type="entry name" value="UbiA"/>
    <property type="match status" value="1"/>
</dbReference>
<protein>
    <recommendedName>
        <fullName evidence="1">4-hydroxybenzoate octaprenyltransferase</fullName>
        <ecNumber evidence="1">2.5.1.39</ecNumber>
    </recommendedName>
    <alternativeName>
        <fullName evidence="1">4-HB polyprenyltransferase</fullName>
    </alternativeName>
</protein>
<feature type="chain" id="PRO_1000069829" description="4-hydroxybenzoate octaprenyltransferase">
    <location>
        <begin position="1"/>
        <end position="296"/>
    </location>
</feature>
<feature type="transmembrane region" description="Helical" evidence="1">
    <location>
        <begin position="28"/>
        <end position="48"/>
    </location>
</feature>
<feature type="transmembrane region" description="Helical" evidence="1">
    <location>
        <begin position="55"/>
        <end position="75"/>
    </location>
</feature>
<feature type="transmembrane region" description="Helical" evidence="1">
    <location>
        <begin position="102"/>
        <end position="122"/>
    </location>
</feature>
<feature type="transmembrane region" description="Helical" evidence="1">
    <location>
        <begin position="145"/>
        <end position="167"/>
    </location>
</feature>
<feature type="transmembrane region" description="Helical" evidence="1">
    <location>
        <begin position="174"/>
        <end position="196"/>
    </location>
</feature>
<feature type="transmembrane region" description="Helical" evidence="1">
    <location>
        <begin position="219"/>
        <end position="239"/>
    </location>
</feature>
<feature type="transmembrane region" description="Helical" evidence="1">
    <location>
        <begin position="241"/>
        <end position="261"/>
    </location>
</feature>
<feature type="transmembrane region" description="Helical" evidence="1">
    <location>
        <begin position="275"/>
        <end position="295"/>
    </location>
</feature>
<accession>Q1I2R3</accession>
<gene>
    <name evidence="1" type="primary">ubiA</name>
    <name type="ordered locus">PSEEN5462</name>
</gene>
<keyword id="KW-0997">Cell inner membrane</keyword>
<keyword id="KW-1003">Cell membrane</keyword>
<keyword id="KW-0460">Magnesium</keyword>
<keyword id="KW-0472">Membrane</keyword>
<keyword id="KW-0808">Transferase</keyword>
<keyword id="KW-0812">Transmembrane</keyword>
<keyword id="KW-1133">Transmembrane helix</keyword>
<keyword id="KW-0831">Ubiquinone biosynthesis</keyword>
<reference key="1">
    <citation type="journal article" date="2006" name="Nat. Biotechnol.">
        <title>Complete genome sequence of the entomopathogenic and metabolically versatile soil bacterium Pseudomonas entomophila.</title>
        <authorList>
            <person name="Vodovar N."/>
            <person name="Vallenet D."/>
            <person name="Cruveiller S."/>
            <person name="Rouy Z."/>
            <person name="Barbe V."/>
            <person name="Acosta C."/>
            <person name="Cattolico L."/>
            <person name="Jubin C."/>
            <person name="Lajus A."/>
            <person name="Segurens B."/>
            <person name="Vacherie B."/>
            <person name="Wincker P."/>
            <person name="Weissenbach J."/>
            <person name="Lemaitre B."/>
            <person name="Medigue C."/>
            <person name="Boccard F."/>
        </authorList>
    </citation>
    <scope>NUCLEOTIDE SEQUENCE [LARGE SCALE GENOMIC DNA]</scope>
    <source>
        <strain>L48</strain>
    </source>
</reference>
<proteinExistence type="inferred from homology"/>
<name>UBIA_PSEE4</name>
<evidence type="ECO:0000255" key="1">
    <source>
        <dbReference type="HAMAP-Rule" id="MF_01635"/>
    </source>
</evidence>
<organism>
    <name type="scientific">Pseudomonas entomophila (strain L48)</name>
    <dbReference type="NCBI Taxonomy" id="384676"/>
    <lineage>
        <taxon>Bacteria</taxon>
        <taxon>Pseudomonadati</taxon>
        <taxon>Pseudomonadota</taxon>
        <taxon>Gammaproteobacteria</taxon>
        <taxon>Pseudomonadales</taxon>
        <taxon>Pseudomonadaceae</taxon>
        <taxon>Pseudomonas</taxon>
    </lineage>
</organism>
<sequence length="296" mass="33033">MYLQLLKSLNRLHPRAWDFVQLSRMDRPIGIYLLLWPTLVAVWIAGNGSPSLKNVLIFALGVVLMRAAGCCINDFADRKVDGHVKRTADRPLASGRVKPREAVMLFALLVGVSFLLVLCTNATTVWLSFGAVALAFCYPFMKRYTYYPQVVLGAAYSWGIPMAFTAAGGELPASAWLLYIANLLWTVGYDTYYAMVDRDDDLKIGVKSTAILFGEADRVIILTLQLLSLGCLLLAGNRFDLGGWYHLGLLAAAACFAWEFWSTRKLDRESCFKAFLHNHWAGMLIFIGVVLDYALR</sequence>
<comment type="function">
    <text evidence="1">Catalyzes the prenylation of para-hydroxybenzoate (PHB) with an all-trans polyprenyl group. Mediates the second step in the final reaction sequence of ubiquinone-8 (UQ-8) biosynthesis, which is the condensation of the polyisoprenoid side chain with PHB, generating the first membrane-bound Q intermediate 3-octaprenyl-4-hydroxybenzoate.</text>
</comment>
<comment type="catalytic activity">
    <reaction evidence="1">
        <text>all-trans-octaprenyl diphosphate + 4-hydroxybenzoate = 4-hydroxy-3-(all-trans-octaprenyl)benzoate + diphosphate</text>
        <dbReference type="Rhea" id="RHEA:27782"/>
        <dbReference type="ChEBI" id="CHEBI:1617"/>
        <dbReference type="ChEBI" id="CHEBI:17879"/>
        <dbReference type="ChEBI" id="CHEBI:33019"/>
        <dbReference type="ChEBI" id="CHEBI:57711"/>
        <dbReference type="EC" id="2.5.1.39"/>
    </reaction>
</comment>
<comment type="cofactor">
    <cofactor evidence="1">
        <name>Mg(2+)</name>
        <dbReference type="ChEBI" id="CHEBI:18420"/>
    </cofactor>
</comment>
<comment type="pathway">
    <text evidence="1">Cofactor biosynthesis; ubiquinone biosynthesis.</text>
</comment>
<comment type="subcellular location">
    <subcellularLocation>
        <location evidence="1">Cell inner membrane</location>
        <topology evidence="1">Multi-pass membrane protein</topology>
    </subcellularLocation>
</comment>
<comment type="similarity">
    <text evidence="1">Belongs to the UbiA prenyltransferase family.</text>
</comment>